<accession>A1A321</accession>
<comment type="subunit">
    <text evidence="1">Homodimer.</text>
</comment>
<comment type="similarity">
    <text evidence="1">Belongs to the UPF0210 family.</text>
</comment>
<keyword id="KW-1185">Reference proteome</keyword>
<feature type="chain" id="PRO_1000066746" description="UPF0210 protein BAD_1323">
    <location>
        <begin position="1"/>
        <end position="454"/>
    </location>
</feature>
<dbReference type="EMBL" id="AP009256">
    <property type="protein sequence ID" value="BAF40104.1"/>
    <property type="molecule type" value="Genomic_DNA"/>
</dbReference>
<dbReference type="RefSeq" id="WP_011743641.1">
    <property type="nucleotide sequence ID" value="NC_008618.1"/>
</dbReference>
<dbReference type="SMR" id="A1A321"/>
<dbReference type="PaxDb" id="1680-BADO_1403"/>
<dbReference type="GeneID" id="4557451"/>
<dbReference type="KEGG" id="bad:BAD_1323"/>
<dbReference type="HOGENOM" id="CLU_048704_0_0_11"/>
<dbReference type="Proteomes" id="UP000008702">
    <property type="component" value="Chromosome"/>
</dbReference>
<dbReference type="CDD" id="cd08025">
    <property type="entry name" value="RNR_PFL_like_DUF711"/>
    <property type="match status" value="1"/>
</dbReference>
<dbReference type="Gene3D" id="3.20.70.20">
    <property type="match status" value="1"/>
</dbReference>
<dbReference type="HAMAP" id="MF_01221">
    <property type="entry name" value="UPF0210"/>
    <property type="match status" value="1"/>
</dbReference>
<dbReference type="InterPro" id="IPR007841">
    <property type="entry name" value="UPF0210"/>
</dbReference>
<dbReference type="NCBIfam" id="NF003700">
    <property type="entry name" value="PRK05313.1"/>
    <property type="match status" value="1"/>
</dbReference>
<dbReference type="PANTHER" id="PTHR37560:SF1">
    <property type="entry name" value="UPF0210 PROTEIN MJ1665"/>
    <property type="match status" value="1"/>
</dbReference>
<dbReference type="PANTHER" id="PTHR37560">
    <property type="entry name" value="UPF0210 PROTEIN SPR0218"/>
    <property type="match status" value="1"/>
</dbReference>
<dbReference type="Pfam" id="PF05167">
    <property type="entry name" value="DUF711"/>
    <property type="match status" value="1"/>
</dbReference>
<dbReference type="SUPFAM" id="SSF51998">
    <property type="entry name" value="PFL-like glycyl radical enzymes"/>
    <property type="match status" value="1"/>
</dbReference>
<gene>
    <name type="ordered locus">BAD_1323</name>
</gene>
<name>Y1323_BIFAA</name>
<proteinExistence type="inferred from homology"/>
<organism>
    <name type="scientific">Bifidobacterium adolescentis (strain ATCC 15703 / DSM 20083 / NCTC 11814 / E194a)</name>
    <dbReference type="NCBI Taxonomy" id="367928"/>
    <lineage>
        <taxon>Bacteria</taxon>
        <taxon>Bacillati</taxon>
        <taxon>Actinomycetota</taxon>
        <taxon>Actinomycetes</taxon>
        <taxon>Bifidobacteriales</taxon>
        <taxon>Bifidobacteriaceae</taxon>
        <taxon>Bifidobacterium</taxon>
    </lineage>
</organism>
<protein>
    <recommendedName>
        <fullName evidence="1">UPF0210 protein BAD_1323</fullName>
    </recommendedName>
</protein>
<sequence length="454" mass="47606">MLNIMEVHETNKMIEQEKLDVRTITMGISLLDCAADSVDEVCENIYNKITTYAKDLVSTGRAIERDFGIPIVNKRITVTPISLVGASSCKSSEDFVKIAHALDRAAKKVGVDLIGGYSALVSKSMTPAEEMLIRSLPQALSETDIVCSSVNVGSTKTGIDMNSVELLGHIVKDIAHATADNDSYGCVKFVAFCNAPDDNPFMAGGFHGVTEGDAVINVGVSGPGVVSRALDEAKGKDFEFLCETIKRTAFKITRVGQLVAQEASRRLGIPFGIIDLSLAPTPAVGDSVGEVLEKIGLEQVGAPGTTAALAMLNDQVKKGGIMASSYVGGLSGAFIPVSEDKNMIDAANNGCLKIEKLEAMTCVCSVGLDMIAIPGDTTAATISGIIADEAAIGMVNQKTTAVRVIPVEGKGVGEMANFGGLMGYAPIIPVNQTSCEAFVTRGGRIPAPIHSFKN</sequence>
<evidence type="ECO:0000255" key="1">
    <source>
        <dbReference type="HAMAP-Rule" id="MF_01221"/>
    </source>
</evidence>
<reference key="1">
    <citation type="submission" date="2006-12" db="EMBL/GenBank/DDBJ databases">
        <title>Bifidobacterium adolescentis complete genome sequence.</title>
        <authorList>
            <person name="Suzuki T."/>
            <person name="Tsuda Y."/>
            <person name="Kanou N."/>
            <person name="Inoue T."/>
            <person name="Kumazaki K."/>
            <person name="Nagano S."/>
            <person name="Hirai S."/>
            <person name="Tanaka K."/>
            <person name="Watanabe K."/>
        </authorList>
    </citation>
    <scope>NUCLEOTIDE SEQUENCE [LARGE SCALE GENOMIC DNA]</scope>
    <source>
        <strain>ATCC 15703 / DSM 20083 / NCTC 11814 / E194a</strain>
    </source>
</reference>